<accession>Q7U7Q3</accession>
<organism>
    <name type="scientific">Parasynechococcus marenigrum (strain WH8102)</name>
    <dbReference type="NCBI Taxonomy" id="84588"/>
    <lineage>
        <taxon>Bacteria</taxon>
        <taxon>Bacillati</taxon>
        <taxon>Cyanobacteriota</taxon>
        <taxon>Cyanophyceae</taxon>
        <taxon>Synechococcales</taxon>
        <taxon>Prochlorococcaceae</taxon>
        <taxon>Parasynechococcus</taxon>
        <taxon>Parasynechococcus marenigrum</taxon>
    </lineage>
</organism>
<proteinExistence type="inferred from homology"/>
<comment type="function">
    <text evidence="1">May play a role in DNA repair. It seems to be involved in an RecBC-independent recombinational process of DNA repair. It may act with RecF and RecO.</text>
</comment>
<comment type="similarity">
    <text evidence="1">Belongs to the RecR family.</text>
</comment>
<reference key="1">
    <citation type="journal article" date="2003" name="Nature">
        <title>The genome of a motile marine Synechococcus.</title>
        <authorList>
            <person name="Palenik B."/>
            <person name="Brahamsha B."/>
            <person name="Larimer F.W."/>
            <person name="Land M.L."/>
            <person name="Hauser L."/>
            <person name="Chain P."/>
            <person name="Lamerdin J.E."/>
            <person name="Regala W."/>
            <person name="Allen E.E."/>
            <person name="McCarren J."/>
            <person name="Paulsen I.T."/>
            <person name="Dufresne A."/>
            <person name="Partensky F."/>
            <person name="Webb E.A."/>
            <person name="Waterbury J."/>
        </authorList>
    </citation>
    <scope>NUCLEOTIDE SEQUENCE [LARGE SCALE GENOMIC DNA]</scope>
    <source>
        <strain>WH8102</strain>
    </source>
</reference>
<gene>
    <name evidence="1" type="primary">recR</name>
    <name type="ordered locus">SYNW0928</name>
</gene>
<dbReference type="EMBL" id="BX569691">
    <property type="protein sequence ID" value="CAE07443.1"/>
    <property type="molecule type" value="Genomic_DNA"/>
</dbReference>
<dbReference type="RefSeq" id="WP_011127793.1">
    <property type="nucleotide sequence ID" value="NC_005070.1"/>
</dbReference>
<dbReference type="SMR" id="Q7U7Q3"/>
<dbReference type="STRING" id="84588.SYNW0928"/>
<dbReference type="KEGG" id="syw:SYNW0928"/>
<dbReference type="eggNOG" id="COG0353">
    <property type="taxonomic scope" value="Bacteria"/>
</dbReference>
<dbReference type="HOGENOM" id="CLU_060739_1_0_3"/>
<dbReference type="Proteomes" id="UP000001422">
    <property type="component" value="Chromosome"/>
</dbReference>
<dbReference type="GO" id="GO:0003677">
    <property type="term" value="F:DNA binding"/>
    <property type="evidence" value="ECO:0007669"/>
    <property type="project" value="UniProtKB-UniRule"/>
</dbReference>
<dbReference type="GO" id="GO:0008270">
    <property type="term" value="F:zinc ion binding"/>
    <property type="evidence" value="ECO:0007669"/>
    <property type="project" value="UniProtKB-KW"/>
</dbReference>
<dbReference type="GO" id="GO:0006310">
    <property type="term" value="P:DNA recombination"/>
    <property type="evidence" value="ECO:0007669"/>
    <property type="project" value="UniProtKB-UniRule"/>
</dbReference>
<dbReference type="GO" id="GO:0006281">
    <property type="term" value="P:DNA repair"/>
    <property type="evidence" value="ECO:0007669"/>
    <property type="project" value="UniProtKB-UniRule"/>
</dbReference>
<dbReference type="CDD" id="cd01025">
    <property type="entry name" value="TOPRIM_recR"/>
    <property type="match status" value="1"/>
</dbReference>
<dbReference type="Gene3D" id="3.40.1360.10">
    <property type="match status" value="1"/>
</dbReference>
<dbReference type="Gene3D" id="6.10.250.240">
    <property type="match status" value="1"/>
</dbReference>
<dbReference type="Gene3D" id="1.10.8.420">
    <property type="entry name" value="RecR Domain 1"/>
    <property type="match status" value="1"/>
</dbReference>
<dbReference type="HAMAP" id="MF_00017">
    <property type="entry name" value="RecR"/>
    <property type="match status" value="1"/>
</dbReference>
<dbReference type="InterPro" id="IPR000093">
    <property type="entry name" value="DNA_Rcmb_RecR"/>
</dbReference>
<dbReference type="InterPro" id="IPR023627">
    <property type="entry name" value="Rcmb_RecR"/>
</dbReference>
<dbReference type="InterPro" id="IPR015967">
    <property type="entry name" value="Rcmb_RecR_Znf"/>
</dbReference>
<dbReference type="InterPro" id="IPR006171">
    <property type="entry name" value="TOPRIM_dom"/>
</dbReference>
<dbReference type="InterPro" id="IPR034137">
    <property type="entry name" value="TOPRIM_RecR"/>
</dbReference>
<dbReference type="NCBIfam" id="TIGR00615">
    <property type="entry name" value="recR"/>
    <property type="match status" value="1"/>
</dbReference>
<dbReference type="PANTHER" id="PTHR30446">
    <property type="entry name" value="RECOMBINATION PROTEIN RECR"/>
    <property type="match status" value="1"/>
</dbReference>
<dbReference type="PANTHER" id="PTHR30446:SF0">
    <property type="entry name" value="RECOMBINATION PROTEIN RECR"/>
    <property type="match status" value="1"/>
</dbReference>
<dbReference type="Pfam" id="PF21175">
    <property type="entry name" value="RecR_C"/>
    <property type="match status" value="1"/>
</dbReference>
<dbReference type="Pfam" id="PF21176">
    <property type="entry name" value="RecR_HhH"/>
    <property type="match status" value="1"/>
</dbReference>
<dbReference type="Pfam" id="PF02132">
    <property type="entry name" value="RecR_ZnF"/>
    <property type="match status" value="1"/>
</dbReference>
<dbReference type="Pfam" id="PF13662">
    <property type="entry name" value="Toprim_4"/>
    <property type="match status" value="1"/>
</dbReference>
<dbReference type="SMART" id="SM00493">
    <property type="entry name" value="TOPRIM"/>
    <property type="match status" value="1"/>
</dbReference>
<dbReference type="SUPFAM" id="SSF111304">
    <property type="entry name" value="Recombination protein RecR"/>
    <property type="match status" value="1"/>
</dbReference>
<dbReference type="PROSITE" id="PS50880">
    <property type="entry name" value="TOPRIM"/>
    <property type="match status" value="1"/>
</dbReference>
<evidence type="ECO:0000255" key="1">
    <source>
        <dbReference type="HAMAP-Rule" id="MF_00017"/>
    </source>
</evidence>
<feature type="chain" id="PRO_0000190410" description="Recombination protein RecR">
    <location>
        <begin position="1"/>
        <end position="192"/>
    </location>
</feature>
<feature type="domain" description="Toprim" evidence="1">
    <location>
        <begin position="74"/>
        <end position="168"/>
    </location>
</feature>
<feature type="zinc finger region" description="C4-type" evidence="1">
    <location>
        <begin position="51"/>
        <end position="66"/>
    </location>
</feature>
<name>RECR_PARMW</name>
<sequence length="192" mass="21385">MARLIDQFERLPGIGPRTAQRLALHLLNQPEEQIRQFADALLAARTQVGQCQTCFHLSADPECEICRNPERRNGLICVVADSRDLLALERTREFQGRYHVLGGLISPMDGIGPELLHVTPLVARINQEDITEVILALTPSVEGDTTSLYLARLLKPFCPVSRIAYGLPMGSELEYADEVTLSRALEGRRPLD</sequence>
<keyword id="KW-0227">DNA damage</keyword>
<keyword id="KW-0233">DNA recombination</keyword>
<keyword id="KW-0234">DNA repair</keyword>
<keyword id="KW-0479">Metal-binding</keyword>
<keyword id="KW-0862">Zinc</keyword>
<keyword id="KW-0863">Zinc-finger</keyword>
<protein>
    <recommendedName>
        <fullName evidence="1">Recombination protein RecR</fullName>
    </recommendedName>
</protein>